<gene>
    <name type="ordered locus">Bcenmc03_2786</name>
</gene>
<protein>
    <recommendedName>
        <fullName evidence="1">Putative 3-methyladenine DNA glycosylase</fullName>
        <ecNumber evidence="1">3.2.2.-</ecNumber>
    </recommendedName>
</protein>
<sequence>MRRSKTAAPWPGTIVPRAFFNRMATEVAPQLLNKILAAADGRAGRIVEVEAYAGALDPAAHTYRGKTPRNATMFGAPGHFYVYFTYGMHWCCNCVCGPDGAGTGVLIRALEPLHGLEQMRAARPPRTRDRDLCRGPARLTQAMGIGGAQDGVDLVGAREGFAIVDDGMAPPADLAGGPRIGIRVGQDLPWRWSVPGNRYVSGAAPRI</sequence>
<name>3MGH_BURO0</name>
<evidence type="ECO:0000255" key="1">
    <source>
        <dbReference type="HAMAP-Rule" id="MF_00527"/>
    </source>
</evidence>
<accession>B1JYM2</accession>
<dbReference type="EC" id="3.2.2.-" evidence="1"/>
<dbReference type="EMBL" id="CP000958">
    <property type="protein sequence ID" value="ACA91945.1"/>
    <property type="molecule type" value="Genomic_DNA"/>
</dbReference>
<dbReference type="RefSeq" id="WP_012329227.1">
    <property type="nucleotide sequence ID" value="NC_010508.1"/>
</dbReference>
<dbReference type="SMR" id="B1JYM2"/>
<dbReference type="GeneID" id="83049570"/>
<dbReference type="KEGG" id="bcm:Bcenmc03_2786"/>
<dbReference type="HOGENOM" id="CLU_060471_3_0_4"/>
<dbReference type="Proteomes" id="UP000002169">
    <property type="component" value="Chromosome 1"/>
</dbReference>
<dbReference type="GO" id="GO:0003905">
    <property type="term" value="F:alkylbase DNA N-glycosylase activity"/>
    <property type="evidence" value="ECO:0007669"/>
    <property type="project" value="InterPro"/>
</dbReference>
<dbReference type="GO" id="GO:0003677">
    <property type="term" value="F:DNA binding"/>
    <property type="evidence" value="ECO:0007669"/>
    <property type="project" value="InterPro"/>
</dbReference>
<dbReference type="GO" id="GO:0006284">
    <property type="term" value="P:base-excision repair"/>
    <property type="evidence" value="ECO:0007669"/>
    <property type="project" value="InterPro"/>
</dbReference>
<dbReference type="CDD" id="cd00540">
    <property type="entry name" value="AAG"/>
    <property type="match status" value="1"/>
</dbReference>
<dbReference type="FunFam" id="3.10.300.10:FF:000001">
    <property type="entry name" value="Putative 3-methyladenine DNA glycosylase"/>
    <property type="match status" value="1"/>
</dbReference>
<dbReference type="Gene3D" id="3.10.300.10">
    <property type="entry name" value="Methylpurine-DNA glycosylase (MPG)"/>
    <property type="match status" value="1"/>
</dbReference>
<dbReference type="HAMAP" id="MF_00527">
    <property type="entry name" value="3MGH"/>
    <property type="match status" value="1"/>
</dbReference>
<dbReference type="InterPro" id="IPR011034">
    <property type="entry name" value="Formyl_transferase-like_C_sf"/>
</dbReference>
<dbReference type="InterPro" id="IPR003180">
    <property type="entry name" value="MPG"/>
</dbReference>
<dbReference type="InterPro" id="IPR036995">
    <property type="entry name" value="MPG_sf"/>
</dbReference>
<dbReference type="NCBIfam" id="TIGR00567">
    <property type="entry name" value="3mg"/>
    <property type="match status" value="1"/>
</dbReference>
<dbReference type="NCBIfam" id="NF002003">
    <property type="entry name" value="PRK00802.1-3"/>
    <property type="match status" value="1"/>
</dbReference>
<dbReference type="PANTHER" id="PTHR10429">
    <property type="entry name" value="DNA-3-METHYLADENINE GLYCOSYLASE"/>
    <property type="match status" value="1"/>
</dbReference>
<dbReference type="PANTHER" id="PTHR10429:SF0">
    <property type="entry name" value="DNA-3-METHYLADENINE GLYCOSYLASE"/>
    <property type="match status" value="1"/>
</dbReference>
<dbReference type="Pfam" id="PF02245">
    <property type="entry name" value="Pur_DNA_glyco"/>
    <property type="match status" value="1"/>
</dbReference>
<dbReference type="SUPFAM" id="SSF50486">
    <property type="entry name" value="FMT C-terminal domain-like"/>
    <property type="match status" value="1"/>
</dbReference>
<proteinExistence type="inferred from homology"/>
<organism>
    <name type="scientific">Burkholderia orbicola (strain MC0-3)</name>
    <dbReference type="NCBI Taxonomy" id="406425"/>
    <lineage>
        <taxon>Bacteria</taxon>
        <taxon>Pseudomonadati</taxon>
        <taxon>Pseudomonadota</taxon>
        <taxon>Betaproteobacteria</taxon>
        <taxon>Burkholderiales</taxon>
        <taxon>Burkholderiaceae</taxon>
        <taxon>Burkholderia</taxon>
        <taxon>Burkholderia cepacia complex</taxon>
        <taxon>Burkholderia orbicola</taxon>
    </lineage>
</organism>
<comment type="similarity">
    <text evidence="1">Belongs to the DNA glycosylase MPG family.</text>
</comment>
<reference key="1">
    <citation type="submission" date="2008-02" db="EMBL/GenBank/DDBJ databases">
        <title>Complete sequence of chromosome 1 of Burkholderia cenocepacia MC0-3.</title>
        <authorList>
            <person name="Copeland A."/>
            <person name="Lucas S."/>
            <person name="Lapidus A."/>
            <person name="Barry K."/>
            <person name="Bruce D."/>
            <person name="Goodwin L."/>
            <person name="Glavina del Rio T."/>
            <person name="Dalin E."/>
            <person name="Tice H."/>
            <person name="Pitluck S."/>
            <person name="Chain P."/>
            <person name="Malfatti S."/>
            <person name="Shin M."/>
            <person name="Vergez L."/>
            <person name="Schmutz J."/>
            <person name="Larimer F."/>
            <person name="Land M."/>
            <person name="Hauser L."/>
            <person name="Kyrpides N."/>
            <person name="Mikhailova N."/>
            <person name="Tiedje J."/>
            <person name="Richardson P."/>
        </authorList>
    </citation>
    <scope>NUCLEOTIDE SEQUENCE [LARGE SCALE GENOMIC DNA]</scope>
    <source>
        <strain>MC0-3</strain>
    </source>
</reference>
<keyword id="KW-0227">DNA damage</keyword>
<keyword id="KW-0234">DNA repair</keyword>
<keyword id="KW-0378">Hydrolase</keyword>
<feature type="chain" id="PRO_1000127751" description="Putative 3-methyladenine DNA glycosylase">
    <location>
        <begin position="1"/>
        <end position="207"/>
    </location>
</feature>